<organism>
    <name type="scientific">Salmonella typhimurium (strain LT2 / SGSC1412 / ATCC 700720)</name>
    <dbReference type="NCBI Taxonomy" id="99287"/>
    <lineage>
        <taxon>Bacteria</taxon>
        <taxon>Pseudomonadati</taxon>
        <taxon>Pseudomonadota</taxon>
        <taxon>Gammaproteobacteria</taxon>
        <taxon>Enterobacterales</taxon>
        <taxon>Enterobacteriaceae</taxon>
        <taxon>Salmonella</taxon>
    </lineage>
</organism>
<name>DKSA_SALTY</name>
<dbReference type="EMBL" id="AF010249">
    <property type="protein sequence ID" value="AAD01437.1"/>
    <property type="molecule type" value="Genomic_DNA"/>
</dbReference>
<dbReference type="EMBL" id="AE006468">
    <property type="protein sequence ID" value="AAL19150.1"/>
    <property type="molecule type" value="Genomic_DNA"/>
</dbReference>
<dbReference type="RefSeq" id="NP_459191.1">
    <property type="nucleotide sequence ID" value="NC_003197.2"/>
</dbReference>
<dbReference type="RefSeq" id="WP_001155232.1">
    <property type="nucleotide sequence ID" value="NC_003197.2"/>
</dbReference>
<dbReference type="SMR" id="P0A1G5"/>
<dbReference type="STRING" id="99287.STM0186"/>
<dbReference type="PaxDb" id="99287-STM0186"/>
<dbReference type="GeneID" id="1251704"/>
<dbReference type="GeneID" id="97600371"/>
<dbReference type="KEGG" id="stm:STM0186"/>
<dbReference type="PATRIC" id="fig|99287.12.peg.196"/>
<dbReference type="HOGENOM" id="CLU_043144_2_0_6"/>
<dbReference type="OMA" id="EENVNHP"/>
<dbReference type="PhylomeDB" id="P0A1G5"/>
<dbReference type="BioCyc" id="SENT99287:STM0186-MONOMER"/>
<dbReference type="PHI-base" id="PHI:6508"/>
<dbReference type="Proteomes" id="UP000001014">
    <property type="component" value="Chromosome"/>
</dbReference>
<dbReference type="GO" id="GO:0005737">
    <property type="term" value="C:cytoplasm"/>
    <property type="evidence" value="ECO:0007669"/>
    <property type="project" value="UniProtKB-SubCell"/>
</dbReference>
<dbReference type="GO" id="GO:0008270">
    <property type="term" value="F:zinc ion binding"/>
    <property type="evidence" value="ECO:0007669"/>
    <property type="project" value="UniProtKB-UniRule"/>
</dbReference>
<dbReference type="GO" id="GO:0006355">
    <property type="term" value="P:regulation of DNA-templated transcription"/>
    <property type="evidence" value="ECO:0000318"/>
    <property type="project" value="GO_Central"/>
</dbReference>
<dbReference type="FunFam" id="1.20.120.910:FF:000001">
    <property type="entry name" value="RNA polymerase-binding transcription factor DksA"/>
    <property type="match status" value="1"/>
</dbReference>
<dbReference type="Gene3D" id="1.20.120.910">
    <property type="entry name" value="DksA, coiled-coil domain"/>
    <property type="match status" value="1"/>
</dbReference>
<dbReference type="HAMAP" id="MF_00926">
    <property type="entry name" value="DksA"/>
    <property type="match status" value="1"/>
</dbReference>
<dbReference type="InterPro" id="IPR048489">
    <property type="entry name" value="DksA_N"/>
</dbReference>
<dbReference type="InterPro" id="IPR012784">
    <property type="entry name" value="DksA_RNA_pol-bd"/>
</dbReference>
<dbReference type="InterPro" id="IPR037187">
    <property type="entry name" value="DnaK_N"/>
</dbReference>
<dbReference type="InterPro" id="IPR020460">
    <property type="entry name" value="Znf_C4-type_bac"/>
</dbReference>
<dbReference type="InterPro" id="IPR000962">
    <property type="entry name" value="Znf_DskA_TraR"/>
</dbReference>
<dbReference type="InterPro" id="IPR020458">
    <property type="entry name" value="Znf_DskA_TraR_CS"/>
</dbReference>
<dbReference type="NCBIfam" id="TIGR02420">
    <property type="entry name" value="dksA"/>
    <property type="match status" value="1"/>
</dbReference>
<dbReference type="NCBIfam" id="NF008045">
    <property type="entry name" value="PRK10778.1"/>
    <property type="match status" value="1"/>
</dbReference>
<dbReference type="PANTHER" id="PTHR33823:SF2">
    <property type="entry name" value="RNA POLYMERASE-BINDING TRANSCRIPTION FACTOR DKSA"/>
    <property type="match status" value="1"/>
</dbReference>
<dbReference type="PANTHER" id="PTHR33823">
    <property type="entry name" value="RNA POLYMERASE-BINDING TRANSCRIPTION FACTOR DKSA-RELATED"/>
    <property type="match status" value="1"/>
</dbReference>
<dbReference type="Pfam" id="PF21157">
    <property type="entry name" value="DksA_N"/>
    <property type="match status" value="1"/>
</dbReference>
<dbReference type="Pfam" id="PF01258">
    <property type="entry name" value="zf-dskA_traR"/>
    <property type="match status" value="1"/>
</dbReference>
<dbReference type="PRINTS" id="PR00618">
    <property type="entry name" value="DKSAZNFINGER"/>
</dbReference>
<dbReference type="SUPFAM" id="SSF109635">
    <property type="entry name" value="DnaK suppressor protein DksA, alpha-hairpin domain"/>
    <property type="match status" value="1"/>
</dbReference>
<dbReference type="SUPFAM" id="SSF57716">
    <property type="entry name" value="Glucocorticoid receptor-like (DNA-binding domain)"/>
    <property type="match status" value="1"/>
</dbReference>
<dbReference type="PROSITE" id="PS01102">
    <property type="entry name" value="ZF_DKSA_1"/>
    <property type="match status" value="1"/>
</dbReference>
<dbReference type="PROSITE" id="PS51128">
    <property type="entry name" value="ZF_DKSA_2"/>
    <property type="match status" value="1"/>
</dbReference>
<protein>
    <recommendedName>
        <fullName evidence="1">RNA polymerase-binding transcription factor DksA</fullName>
    </recommendedName>
</protein>
<sequence>MQEGQNRKTSSLSILAIAGVEPYQEKPGEEYMNEAQLSHFKRILEAWRNQLRDEVDRTVTHMQDEAANFPDPVDRAAQEEEFSLELRNRDRERKLIKKIEKTLKKVEDEDFGYCESCGVEIGIRRLEARPTADLCIDCKTLAEIREKQMAG</sequence>
<gene>
    <name evidence="1" type="primary">dksA</name>
    <name type="ordered locus">STM0186</name>
</gene>
<keyword id="KW-0175">Coiled coil</keyword>
<keyword id="KW-0963">Cytoplasm</keyword>
<keyword id="KW-0479">Metal-binding</keyword>
<keyword id="KW-1185">Reference proteome</keyword>
<keyword id="KW-0862">Zinc</keyword>
<keyword id="KW-0863">Zinc-finger</keyword>
<feature type="chain" id="PRO_0000187540" description="RNA polymerase-binding transcription factor DksA">
    <location>
        <begin position="1"/>
        <end position="151"/>
    </location>
</feature>
<feature type="zinc finger region" description="dksA C4-type" evidence="1">
    <location>
        <begin position="114"/>
        <end position="138"/>
    </location>
</feature>
<feature type="coiled-coil region" evidence="1">
    <location>
        <begin position="34"/>
        <end position="54"/>
    </location>
</feature>
<feature type="binding site" evidence="1">
    <location>
        <position position="114"/>
    </location>
    <ligand>
        <name>Zn(2+)</name>
        <dbReference type="ChEBI" id="CHEBI:29105"/>
    </ligand>
</feature>
<feature type="binding site" evidence="1">
    <location>
        <position position="117"/>
    </location>
    <ligand>
        <name>Zn(2+)</name>
        <dbReference type="ChEBI" id="CHEBI:29105"/>
    </ligand>
</feature>
<feature type="binding site" evidence="1">
    <location>
        <position position="135"/>
    </location>
    <ligand>
        <name>Zn(2+)</name>
        <dbReference type="ChEBI" id="CHEBI:29105"/>
    </ligand>
</feature>
<feature type="binding site" evidence="1">
    <location>
        <position position="138"/>
    </location>
    <ligand>
        <name>Zn(2+)</name>
        <dbReference type="ChEBI" id="CHEBI:29105"/>
    </ligand>
</feature>
<evidence type="ECO:0000255" key="1">
    <source>
        <dbReference type="HAMAP-Rule" id="MF_00926"/>
    </source>
</evidence>
<reference key="1">
    <citation type="journal article" date="1998" name="Infect. Immun.">
        <title>Identification of Salmonella typhimurium genes required for colonization of the chicken alimentary tract and for virulence in newly hatched chicks.</title>
        <authorList>
            <person name="Turner A.K."/>
            <person name="Lovell M.A."/>
            <person name="Hulme S.D."/>
            <person name="Zhang-Barber L."/>
            <person name="Barrow P.A."/>
        </authorList>
    </citation>
    <scope>NUCLEOTIDE SEQUENCE [GENOMIC DNA]</scope>
    <source>
        <strain>F98</strain>
    </source>
</reference>
<reference key="2">
    <citation type="journal article" date="2001" name="Nature">
        <title>Complete genome sequence of Salmonella enterica serovar Typhimurium LT2.</title>
        <authorList>
            <person name="McClelland M."/>
            <person name="Sanderson K.E."/>
            <person name="Spieth J."/>
            <person name="Clifton S.W."/>
            <person name="Latreille P."/>
            <person name="Courtney L."/>
            <person name="Porwollik S."/>
            <person name="Ali J."/>
            <person name="Dante M."/>
            <person name="Du F."/>
            <person name="Hou S."/>
            <person name="Layman D."/>
            <person name="Leonard S."/>
            <person name="Nguyen C."/>
            <person name="Scott K."/>
            <person name="Holmes A."/>
            <person name="Grewal N."/>
            <person name="Mulvaney E."/>
            <person name="Ryan E."/>
            <person name="Sun H."/>
            <person name="Florea L."/>
            <person name="Miller W."/>
            <person name="Stoneking T."/>
            <person name="Nhan M."/>
            <person name="Waterston R."/>
            <person name="Wilson R.K."/>
        </authorList>
    </citation>
    <scope>NUCLEOTIDE SEQUENCE [LARGE SCALE GENOMIC DNA]</scope>
    <source>
        <strain>LT2 / SGSC1412 / ATCC 700720</strain>
    </source>
</reference>
<proteinExistence type="inferred from homology"/>
<comment type="function">
    <text evidence="1">Transcription factor that acts by binding directly to the RNA polymerase (RNAP). Required for negative regulation of rRNA expression and positive regulation of several amino acid biosynthesis promoters. Also required for regulation of fis expression.</text>
</comment>
<comment type="subunit">
    <text evidence="1">Interacts directly with the RNA polymerase.</text>
</comment>
<comment type="subcellular location">
    <subcellularLocation>
        <location evidence="1">Cytoplasm</location>
    </subcellularLocation>
</comment>
<comment type="similarity">
    <text evidence="1">Belongs to the DksA family.</text>
</comment>
<accession>P0A1G5</accession>
<accession>Q9ZIW3</accession>